<evidence type="ECO:0000255" key="1"/>
<evidence type="ECO:0000256" key="2">
    <source>
        <dbReference type="SAM" id="MobiDB-lite"/>
    </source>
</evidence>
<evidence type="ECO:0000305" key="3"/>
<gene>
    <name type="primary">shisal1a</name>
    <name type="ORF">si:dkey-14k9.2</name>
    <name type="ORF">zgc:136242</name>
</gene>
<protein>
    <recommendedName>
        <fullName>Protein shisa-like-1a</fullName>
    </recommendedName>
</protein>
<sequence length="203" mass="23651">MIMNGRWSFNTLAIIFILLSTAALSAHFRVCEPYSDHKGRYHFGFHCPRLSDNKTYIFCCHHNNTAFKYCCNETEFQSVMQLNLTANSDSFAHNNYTALIGVWIYGFFVMVLLALDFLYYSAMNYELCRVYLEKWGLGGRWLKQARSQWHSTVQEGELNTGPGLSQQQQLHLHHHHHHHHPRHSLRGDTQSPTLLSFQTSTAW</sequence>
<feature type="signal peptide" evidence="1">
    <location>
        <begin position="1"/>
        <end position="25"/>
    </location>
</feature>
<feature type="chain" id="PRO_0000318953" description="Protein shisa-like-1a">
    <location>
        <begin position="26"/>
        <end position="203"/>
    </location>
</feature>
<feature type="topological domain" description="Extracellular" evidence="1">
    <location>
        <begin position="26"/>
        <end position="97"/>
    </location>
</feature>
<feature type="transmembrane region" description="Helical" evidence="1">
    <location>
        <begin position="98"/>
        <end position="118"/>
    </location>
</feature>
<feature type="topological domain" description="Cytoplasmic" evidence="1">
    <location>
        <begin position="119"/>
        <end position="203"/>
    </location>
</feature>
<feature type="region of interest" description="Disordered" evidence="2">
    <location>
        <begin position="157"/>
        <end position="191"/>
    </location>
</feature>
<feature type="compositionally biased region" description="Low complexity" evidence="2">
    <location>
        <begin position="161"/>
        <end position="170"/>
    </location>
</feature>
<feature type="compositionally biased region" description="Basic residues" evidence="2">
    <location>
        <begin position="171"/>
        <end position="184"/>
    </location>
</feature>
<feature type="glycosylation site" description="N-linked (GlcNAc...) asparagine" evidence="1">
    <location>
        <position position="53"/>
    </location>
</feature>
<feature type="glycosylation site" description="N-linked (GlcNAc...) asparagine" evidence="1">
    <location>
        <position position="63"/>
    </location>
</feature>
<feature type="glycosylation site" description="N-linked (GlcNAc...) asparagine" evidence="1">
    <location>
        <position position="72"/>
    </location>
</feature>
<feature type="glycosylation site" description="N-linked (GlcNAc...) asparagine" evidence="1">
    <location>
        <position position="83"/>
    </location>
</feature>
<feature type="glycosylation site" description="N-linked (GlcNAc...) asparagine" evidence="1">
    <location>
        <position position="95"/>
    </location>
</feature>
<feature type="sequence conflict" description="In Ref. 2; AAI15048." evidence="3" ref="2">
    <original>I</original>
    <variation>T</variation>
    <location>
        <position position="2"/>
    </location>
</feature>
<feature type="sequence conflict" description="In Ref. 2; AAI15048." evidence="3" ref="2">
    <original>S</original>
    <variation>G</variation>
    <location>
        <position position="90"/>
    </location>
</feature>
<keyword id="KW-0325">Glycoprotein</keyword>
<keyword id="KW-0472">Membrane</keyword>
<keyword id="KW-1185">Reference proteome</keyword>
<keyword id="KW-0732">Signal</keyword>
<keyword id="KW-0812">Transmembrane</keyword>
<keyword id="KW-1133">Transmembrane helix</keyword>
<organism>
    <name type="scientific">Danio rerio</name>
    <name type="common">Zebrafish</name>
    <name type="synonym">Brachydanio rerio</name>
    <dbReference type="NCBI Taxonomy" id="7955"/>
    <lineage>
        <taxon>Eukaryota</taxon>
        <taxon>Metazoa</taxon>
        <taxon>Chordata</taxon>
        <taxon>Craniata</taxon>
        <taxon>Vertebrata</taxon>
        <taxon>Euteleostomi</taxon>
        <taxon>Actinopterygii</taxon>
        <taxon>Neopterygii</taxon>
        <taxon>Teleostei</taxon>
        <taxon>Ostariophysi</taxon>
        <taxon>Cypriniformes</taxon>
        <taxon>Danionidae</taxon>
        <taxon>Danioninae</taxon>
        <taxon>Danio</taxon>
    </lineage>
</organism>
<reference key="1">
    <citation type="journal article" date="2013" name="Nature">
        <title>The zebrafish reference genome sequence and its relationship to the human genome.</title>
        <authorList>
            <person name="Howe K."/>
            <person name="Clark M.D."/>
            <person name="Torroja C.F."/>
            <person name="Torrance J."/>
            <person name="Berthelot C."/>
            <person name="Muffato M."/>
            <person name="Collins J.E."/>
            <person name="Humphray S."/>
            <person name="McLaren K."/>
            <person name="Matthews L."/>
            <person name="McLaren S."/>
            <person name="Sealy I."/>
            <person name="Caccamo M."/>
            <person name="Churcher C."/>
            <person name="Scott C."/>
            <person name="Barrett J.C."/>
            <person name="Koch R."/>
            <person name="Rauch G.J."/>
            <person name="White S."/>
            <person name="Chow W."/>
            <person name="Kilian B."/>
            <person name="Quintais L.T."/>
            <person name="Guerra-Assuncao J.A."/>
            <person name="Zhou Y."/>
            <person name="Gu Y."/>
            <person name="Yen J."/>
            <person name="Vogel J.H."/>
            <person name="Eyre T."/>
            <person name="Redmond S."/>
            <person name="Banerjee R."/>
            <person name="Chi J."/>
            <person name="Fu B."/>
            <person name="Langley E."/>
            <person name="Maguire S.F."/>
            <person name="Laird G.K."/>
            <person name="Lloyd D."/>
            <person name="Kenyon E."/>
            <person name="Donaldson S."/>
            <person name="Sehra H."/>
            <person name="Almeida-King J."/>
            <person name="Loveland J."/>
            <person name="Trevanion S."/>
            <person name="Jones M."/>
            <person name="Quail M."/>
            <person name="Willey D."/>
            <person name="Hunt A."/>
            <person name="Burton J."/>
            <person name="Sims S."/>
            <person name="McLay K."/>
            <person name="Plumb B."/>
            <person name="Davis J."/>
            <person name="Clee C."/>
            <person name="Oliver K."/>
            <person name="Clark R."/>
            <person name="Riddle C."/>
            <person name="Elliot D."/>
            <person name="Threadgold G."/>
            <person name="Harden G."/>
            <person name="Ware D."/>
            <person name="Begum S."/>
            <person name="Mortimore B."/>
            <person name="Kerry G."/>
            <person name="Heath P."/>
            <person name="Phillimore B."/>
            <person name="Tracey A."/>
            <person name="Corby N."/>
            <person name="Dunn M."/>
            <person name="Johnson C."/>
            <person name="Wood J."/>
            <person name="Clark S."/>
            <person name="Pelan S."/>
            <person name="Griffiths G."/>
            <person name="Smith M."/>
            <person name="Glithero R."/>
            <person name="Howden P."/>
            <person name="Barker N."/>
            <person name="Lloyd C."/>
            <person name="Stevens C."/>
            <person name="Harley J."/>
            <person name="Holt K."/>
            <person name="Panagiotidis G."/>
            <person name="Lovell J."/>
            <person name="Beasley H."/>
            <person name="Henderson C."/>
            <person name="Gordon D."/>
            <person name="Auger K."/>
            <person name="Wright D."/>
            <person name="Collins J."/>
            <person name="Raisen C."/>
            <person name="Dyer L."/>
            <person name="Leung K."/>
            <person name="Robertson L."/>
            <person name="Ambridge K."/>
            <person name="Leongamornlert D."/>
            <person name="McGuire S."/>
            <person name="Gilderthorp R."/>
            <person name="Griffiths C."/>
            <person name="Manthravadi D."/>
            <person name="Nichol S."/>
            <person name="Barker G."/>
            <person name="Whitehead S."/>
            <person name="Kay M."/>
            <person name="Brown J."/>
            <person name="Murnane C."/>
            <person name="Gray E."/>
            <person name="Humphries M."/>
            <person name="Sycamore N."/>
            <person name="Barker D."/>
            <person name="Saunders D."/>
            <person name="Wallis J."/>
            <person name="Babbage A."/>
            <person name="Hammond S."/>
            <person name="Mashreghi-Mohammadi M."/>
            <person name="Barr L."/>
            <person name="Martin S."/>
            <person name="Wray P."/>
            <person name="Ellington A."/>
            <person name="Matthews N."/>
            <person name="Ellwood M."/>
            <person name="Woodmansey R."/>
            <person name="Clark G."/>
            <person name="Cooper J."/>
            <person name="Tromans A."/>
            <person name="Grafham D."/>
            <person name="Skuce C."/>
            <person name="Pandian R."/>
            <person name="Andrews R."/>
            <person name="Harrison E."/>
            <person name="Kimberley A."/>
            <person name="Garnett J."/>
            <person name="Fosker N."/>
            <person name="Hall R."/>
            <person name="Garner P."/>
            <person name="Kelly D."/>
            <person name="Bird C."/>
            <person name="Palmer S."/>
            <person name="Gehring I."/>
            <person name="Berger A."/>
            <person name="Dooley C.M."/>
            <person name="Ersan-Urun Z."/>
            <person name="Eser C."/>
            <person name="Geiger H."/>
            <person name="Geisler M."/>
            <person name="Karotki L."/>
            <person name="Kirn A."/>
            <person name="Konantz J."/>
            <person name="Konantz M."/>
            <person name="Oberlander M."/>
            <person name="Rudolph-Geiger S."/>
            <person name="Teucke M."/>
            <person name="Lanz C."/>
            <person name="Raddatz G."/>
            <person name="Osoegawa K."/>
            <person name="Zhu B."/>
            <person name="Rapp A."/>
            <person name="Widaa S."/>
            <person name="Langford C."/>
            <person name="Yang F."/>
            <person name="Schuster S.C."/>
            <person name="Carter N.P."/>
            <person name="Harrow J."/>
            <person name="Ning Z."/>
            <person name="Herrero J."/>
            <person name="Searle S.M."/>
            <person name="Enright A."/>
            <person name="Geisler R."/>
            <person name="Plasterk R.H."/>
            <person name="Lee C."/>
            <person name="Westerfield M."/>
            <person name="de Jong P.J."/>
            <person name="Zon L.I."/>
            <person name="Postlethwait J.H."/>
            <person name="Nusslein-Volhard C."/>
            <person name="Hubbard T.J."/>
            <person name="Roest Crollius H."/>
            <person name="Rogers J."/>
            <person name="Stemple D.L."/>
        </authorList>
    </citation>
    <scope>NUCLEOTIDE SEQUENCE [LARGE SCALE GENOMIC DNA]</scope>
    <source>
        <strain>Tuebingen</strain>
    </source>
</reference>
<reference key="2">
    <citation type="submission" date="2006-04" db="EMBL/GenBank/DDBJ databases">
        <authorList>
            <consortium name="NIH - Zebrafish Gene Collection (ZGC) project"/>
        </authorList>
    </citation>
    <scope>NUCLEOTIDE SEQUENCE [LARGE SCALE MRNA]</scope>
    <source>
        <tissue>Larva</tissue>
    </source>
</reference>
<name>SHSL1_DANRE</name>
<proteinExistence type="evidence at transcript level"/>
<comment type="subcellular location">
    <subcellularLocation>
        <location evidence="3">Membrane</location>
        <topology evidence="3">Single-pass type I membrane protein</topology>
    </subcellularLocation>
</comment>
<comment type="similarity">
    <text evidence="3">Belongs to the shisa family.</text>
</comment>
<comment type="sequence caution" evidence="3">
    <conflict type="erroneous gene model prediction">
        <sequence resource="EMBL-CDS" id="CAH68995"/>
    </conflict>
</comment>
<dbReference type="EMBL" id="BX649347">
    <property type="protein sequence ID" value="CAH68995.1"/>
    <property type="status" value="ALT_SEQ"/>
    <property type="molecule type" value="Genomic_DNA"/>
</dbReference>
<dbReference type="EMBL" id="BC115047">
    <property type="protein sequence ID" value="AAI15048.1"/>
    <property type="molecule type" value="mRNA"/>
</dbReference>
<dbReference type="SMR" id="Q1RMB5"/>
<dbReference type="FunCoup" id="Q1RMB5">
    <property type="interactions" value="1443"/>
</dbReference>
<dbReference type="GlyCosmos" id="Q1RMB5">
    <property type="glycosylation" value="5 sites, No reported glycans"/>
</dbReference>
<dbReference type="PaxDb" id="7955-ENSDARP00000067034"/>
<dbReference type="AGR" id="ZFIN:ZDB-GENE-041210-130"/>
<dbReference type="ZFIN" id="ZDB-GENE-041210-130">
    <property type="gene designation" value="shisal1a"/>
</dbReference>
<dbReference type="eggNOG" id="ENOG502R0N8">
    <property type="taxonomic scope" value="Eukaryota"/>
</dbReference>
<dbReference type="InParanoid" id="Q1RMB5"/>
<dbReference type="PhylomeDB" id="Q1RMB5"/>
<dbReference type="TreeFam" id="TF331539"/>
<dbReference type="PRO" id="PR:Q1RMB5"/>
<dbReference type="Proteomes" id="UP000000437">
    <property type="component" value="Unplaced"/>
</dbReference>
<dbReference type="GO" id="GO:0016020">
    <property type="term" value="C:membrane"/>
    <property type="evidence" value="ECO:0007669"/>
    <property type="project" value="UniProtKB-SubCell"/>
</dbReference>
<dbReference type="InterPro" id="IPR026910">
    <property type="entry name" value="Shisa"/>
</dbReference>
<dbReference type="InterPro" id="IPR053891">
    <property type="entry name" value="Shisa_N"/>
</dbReference>
<dbReference type="PANTHER" id="PTHR31395:SF11">
    <property type="entry name" value="PROTEIN SHISA-LIKE-1"/>
    <property type="match status" value="1"/>
</dbReference>
<dbReference type="PANTHER" id="PTHR31395">
    <property type="entry name" value="SHISA"/>
    <property type="match status" value="1"/>
</dbReference>
<dbReference type="Pfam" id="PF13908">
    <property type="entry name" value="Shisa_N"/>
    <property type="match status" value="1"/>
</dbReference>
<accession>Q1RMB5</accession>
<accession>Q5TYY3</accession>